<comment type="function">
    <text>Calmodulin mediates the control of a large number of enzymes, ion channels and other proteins by Ca(2+). Among the enzymes to be stimulated by the calmodulin-Ca(2+) complex are a number of protein kinases and phosphatases.</text>
</comment>
<comment type="subunit">
    <text evidence="2">Interacts with KCBP.</text>
</comment>
<comment type="interaction">
    <interactant intactId="EBI-1236097">
        <id>Q03509</id>
    </interactant>
    <interactant intactId="EBI-1235761">
        <id>Q8LG64</id>
        <label>CDKB2-2</label>
    </interactant>
    <organismsDiffer>false</organismsDiffer>
    <experiments>2</experiments>
</comment>
<comment type="interaction">
    <interactant intactId="EBI-1236097">
        <id>Q03509</id>
    </interactant>
    <interactant intactId="EBI-1235782">
        <id>Q42479</id>
        <label>CPK3</label>
    </interactant>
    <organismsDiffer>false</organismsDiffer>
    <experiments>2</experiments>
</comment>
<comment type="interaction">
    <interactant intactId="EBI-1236097">
        <id>Q03509</id>
    </interactant>
    <interactant intactId="EBI-1235834">
        <id>P55737</id>
        <label>HSP90-2</label>
    </interactant>
    <organismsDiffer>false</organismsDiffer>
    <experiments>2</experiments>
</comment>
<comment type="interaction">
    <interactant intactId="EBI-1236097">
        <id>Q03509</id>
    </interactant>
    <interactant intactId="EBI-1235997">
        <id>D3K0M2</id>
        <label>IAA31</label>
    </interactant>
    <organismsDiffer>false</organismsDiffer>
    <experiments>2</experiments>
</comment>
<comment type="interaction">
    <interactant intactId="EBI-1236097">
        <id>Q03509</id>
    </interactant>
    <interactant intactId="EBI-1749651">
        <id>Q9FHN8</id>
        <label>KIN14E</label>
    </interactant>
    <organismsDiffer>false</organismsDiffer>
    <experiments>2</experiments>
</comment>
<comment type="interaction">
    <interactant intactId="EBI-1236097">
        <id>Q03509</id>
    </interactant>
    <interactant intactId="EBI-1235872">
        <id>Q9SND6</id>
        <label>MAPKKK20</label>
    </interactant>
    <organismsDiffer>false</organismsDiffer>
    <experiments>2</experiments>
</comment>
<comment type="interaction">
    <interactant intactId="EBI-1236097">
        <id>Q03509</id>
    </interactant>
    <interactant intactId="EBI-1235819">
        <id>Q2V359</id>
        <label>SAUR70</label>
    </interactant>
    <organismsDiffer>false</organismsDiffer>
    <experiments>2</experiments>
</comment>
<comment type="interaction">
    <interactant intactId="EBI-1236097">
        <id>Q03509</id>
    </interactant>
    <interactant intactId="EBI-1235980">
        <id>Q9SUP6</id>
        <label>WRKY53</label>
    </interactant>
    <organismsDiffer>false</organismsDiffer>
    <experiments>2</experiments>
</comment>
<comment type="miscellaneous">
    <text>This protein has four functional calcium-binding sites.</text>
</comment>
<comment type="similarity">
    <text evidence="3">Belongs to the calmodulin family.</text>
</comment>
<accession>Q03509</accession>
<reference key="1">
    <citation type="journal article" date="1993" name="Plant Mol. Biol.">
        <title>Calmodulin isoforms in Arabidopsis encoded by multiple divergent mRNAs.</title>
        <authorList>
            <person name="Gawienowski M.C."/>
            <person name="Szymanski D."/>
            <person name="Perera I.Y."/>
            <person name="Zielinski R.E."/>
        </authorList>
    </citation>
    <scope>NUCLEOTIDE SEQUENCE [MRNA]</scope>
</reference>
<reference key="2">
    <citation type="journal article" date="2000" name="Nature">
        <title>Sequence and analysis of chromosome 5 of the plant Arabidopsis thaliana.</title>
        <authorList>
            <person name="Tabata S."/>
            <person name="Kaneko T."/>
            <person name="Nakamura Y."/>
            <person name="Kotani H."/>
            <person name="Kato T."/>
            <person name="Asamizu E."/>
            <person name="Miyajima N."/>
            <person name="Sasamoto S."/>
            <person name="Kimura T."/>
            <person name="Hosouchi T."/>
            <person name="Kawashima K."/>
            <person name="Kohara M."/>
            <person name="Matsumoto M."/>
            <person name="Matsuno A."/>
            <person name="Muraki A."/>
            <person name="Nakayama S."/>
            <person name="Nakazaki N."/>
            <person name="Naruo K."/>
            <person name="Okumura S."/>
            <person name="Shinpo S."/>
            <person name="Takeuchi C."/>
            <person name="Wada T."/>
            <person name="Watanabe A."/>
            <person name="Yamada M."/>
            <person name="Yasuda M."/>
            <person name="Sato S."/>
            <person name="de la Bastide M."/>
            <person name="Huang E."/>
            <person name="Spiegel L."/>
            <person name="Gnoj L."/>
            <person name="O'Shaughnessy A."/>
            <person name="Preston R."/>
            <person name="Habermann K."/>
            <person name="Murray J."/>
            <person name="Johnson D."/>
            <person name="Rohlfing T."/>
            <person name="Nelson J."/>
            <person name="Stoneking T."/>
            <person name="Pepin K."/>
            <person name="Spieth J."/>
            <person name="Sekhon M."/>
            <person name="Armstrong J."/>
            <person name="Becker M."/>
            <person name="Belter E."/>
            <person name="Cordum H."/>
            <person name="Cordes M."/>
            <person name="Courtney L."/>
            <person name="Courtney W."/>
            <person name="Dante M."/>
            <person name="Du H."/>
            <person name="Edwards J."/>
            <person name="Fryman J."/>
            <person name="Haakensen B."/>
            <person name="Lamar E."/>
            <person name="Latreille P."/>
            <person name="Leonard S."/>
            <person name="Meyer R."/>
            <person name="Mulvaney E."/>
            <person name="Ozersky P."/>
            <person name="Riley A."/>
            <person name="Strowmatt C."/>
            <person name="Wagner-McPherson C."/>
            <person name="Wollam A."/>
            <person name="Yoakum M."/>
            <person name="Bell M."/>
            <person name="Dedhia N."/>
            <person name="Parnell L."/>
            <person name="Shah R."/>
            <person name="Rodriguez M."/>
            <person name="Hoon See L."/>
            <person name="Vil D."/>
            <person name="Baker J."/>
            <person name="Kirchoff K."/>
            <person name="Toth K."/>
            <person name="King L."/>
            <person name="Bahret A."/>
            <person name="Miller B."/>
            <person name="Marra M.A."/>
            <person name="Martienssen R."/>
            <person name="McCombie W.R."/>
            <person name="Wilson R.K."/>
            <person name="Murphy G."/>
            <person name="Bancroft I."/>
            <person name="Volckaert G."/>
            <person name="Wambutt R."/>
            <person name="Duesterhoeft A."/>
            <person name="Stiekema W."/>
            <person name="Pohl T."/>
            <person name="Entian K.-D."/>
            <person name="Terryn N."/>
            <person name="Hartley N."/>
            <person name="Bent E."/>
            <person name="Johnson S."/>
            <person name="Langham S.-A."/>
            <person name="McCullagh B."/>
            <person name="Robben J."/>
            <person name="Grymonprez B."/>
            <person name="Zimmermann W."/>
            <person name="Ramsperger U."/>
            <person name="Wedler H."/>
            <person name="Balke K."/>
            <person name="Wedler E."/>
            <person name="Peters S."/>
            <person name="van Staveren M."/>
            <person name="Dirkse W."/>
            <person name="Mooijman P."/>
            <person name="Klein Lankhorst R."/>
            <person name="Weitzenegger T."/>
            <person name="Bothe G."/>
            <person name="Rose M."/>
            <person name="Hauf J."/>
            <person name="Berneiser S."/>
            <person name="Hempel S."/>
            <person name="Feldpausch M."/>
            <person name="Lamberth S."/>
            <person name="Villarroel R."/>
            <person name="Gielen J."/>
            <person name="Ardiles W."/>
            <person name="Bents O."/>
            <person name="Lemcke K."/>
            <person name="Kolesov G."/>
            <person name="Mayer K.F.X."/>
            <person name="Rudd S."/>
            <person name="Schoof H."/>
            <person name="Schueller C."/>
            <person name="Zaccaria P."/>
            <person name="Mewes H.-W."/>
            <person name="Bevan M."/>
            <person name="Fransz P.F."/>
        </authorList>
    </citation>
    <scope>NUCLEOTIDE SEQUENCE [LARGE SCALE GENOMIC DNA]</scope>
    <source>
        <strain>cv. Columbia</strain>
    </source>
</reference>
<reference key="3">
    <citation type="journal article" date="2017" name="Plant J.">
        <title>Araport11: a complete reannotation of the Arabidopsis thaliana reference genome.</title>
        <authorList>
            <person name="Cheng C.Y."/>
            <person name="Krishnakumar V."/>
            <person name="Chan A.P."/>
            <person name="Thibaud-Nissen F."/>
            <person name="Schobel S."/>
            <person name="Town C.D."/>
        </authorList>
    </citation>
    <scope>GENOME REANNOTATION</scope>
    <source>
        <strain>cv. Columbia</strain>
    </source>
</reference>
<reference key="4">
    <citation type="journal article" date="2003" name="Science">
        <title>Empirical analysis of transcriptional activity in the Arabidopsis genome.</title>
        <authorList>
            <person name="Yamada K."/>
            <person name="Lim J."/>
            <person name="Dale J.M."/>
            <person name="Chen H."/>
            <person name="Shinn P."/>
            <person name="Palm C.J."/>
            <person name="Southwick A.M."/>
            <person name="Wu H.C."/>
            <person name="Kim C.J."/>
            <person name="Nguyen M."/>
            <person name="Pham P.K."/>
            <person name="Cheuk R.F."/>
            <person name="Karlin-Newmann G."/>
            <person name="Liu S.X."/>
            <person name="Lam B."/>
            <person name="Sakano H."/>
            <person name="Wu T."/>
            <person name="Yu G."/>
            <person name="Miranda M."/>
            <person name="Quach H.L."/>
            <person name="Tripp M."/>
            <person name="Chang C.H."/>
            <person name="Lee J.M."/>
            <person name="Toriumi M.J."/>
            <person name="Chan M.M."/>
            <person name="Tang C.C."/>
            <person name="Onodera C.S."/>
            <person name="Deng J.M."/>
            <person name="Akiyama K."/>
            <person name="Ansari Y."/>
            <person name="Arakawa T."/>
            <person name="Banh J."/>
            <person name="Banno F."/>
            <person name="Bowser L."/>
            <person name="Brooks S.Y."/>
            <person name="Carninci P."/>
            <person name="Chao Q."/>
            <person name="Choy N."/>
            <person name="Enju A."/>
            <person name="Goldsmith A.D."/>
            <person name="Gurjal M."/>
            <person name="Hansen N.F."/>
            <person name="Hayashizaki Y."/>
            <person name="Johnson-Hopson C."/>
            <person name="Hsuan V.W."/>
            <person name="Iida K."/>
            <person name="Karnes M."/>
            <person name="Khan S."/>
            <person name="Koesema E."/>
            <person name="Ishida J."/>
            <person name="Jiang P.X."/>
            <person name="Jones T."/>
            <person name="Kawai J."/>
            <person name="Kamiya A."/>
            <person name="Meyers C."/>
            <person name="Nakajima M."/>
            <person name="Narusaka M."/>
            <person name="Seki M."/>
            <person name="Sakurai T."/>
            <person name="Satou M."/>
            <person name="Tamse R."/>
            <person name="Vaysberg M."/>
            <person name="Wallender E.K."/>
            <person name="Wong C."/>
            <person name="Yamamura Y."/>
            <person name="Yuan S."/>
            <person name="Shinozaki K."/>
            <person name="Davis R.W."/>
            <person name="Theologis A."/>
            <person name="Ecker J.R."/>
        </authorList>
    </citation>
    <scope>NUCLEOTIDE SEQUENCE [LARGE SCALE MRNA]</scope>
    <source>
        <strain>cv. Columbia</strain>
    </source>
</reference>
<reference key="5">
    <citation type="journal article" date="1999" name="J. Biol. Chem.">
        <title>Interaction of a kinesin-like protein with calmodulin isoforms from Arabidopsis.</title>
        <authorList>
            <person name="Reddy V.S."/>
            <person name="Safadi F."/>
            <person name="Zielinski R.E."/>
            <person name="Reddy A.S."/>
        </authorList>
    </citation>
    <scope>INTERACTION WITH KCBP</scope>
</reference>
<reference key="6">
    <citation type="journal article" date="2003" name="New Phytol.">
        <title>Calmodulins and related potential calcium sensors of Arabidopsis.</title>
        <authorList>
            <person name="McCormack E."/>
            <person name="Braam J."/>
        </authorList>
    </citation>
    <scope>GENE FAMILY</scope>
    <scope>NOMENCLATURE</scope>
</reference>
<protein>
    <recommendedName>
        <fullName>Calmodulin-6</fullName>
        <shortName>CaM-6</shortName>
    </recommendedName>
</protein>
<proteinExistence type="evidence at protein level"/>
<keyword id="KW-0106">Calcium</keyword>
<keyword id="KW-0479">Metal-binding</keyword>
<keyword id="KW-1185">Reference proteome</keyword>
<keyword id="KW-0677">Repeat</keyword>
<evidence type="ECO:0000255" key="1">
    <source>
        <dbReference type="PROSITE-ProRule" id="PRU00448"/>
    </source>
</evidence>
<evidence type="ECO:0000269" key="2">
    <source>
    </source>
</evidence>
<evidence type="ECO:0000305" key="3"/>
<name>CALM6_ARATH</name>
<sequence>MADQLTDDQISEFKEAFSLFDKDGDGCITTKELGTVMRSLGQNPTEAELQDMINEVDADGNGTIDFPEFLNLMARKMKDTDSEEELKEAFRVFDKDQNGFISAAELRHVMTNLGEKLSDEEVDEMIREADVDGDGQINYEEFVKVMMAK</sequence>
<organism>
    <name type="scientific">Arabidopsis thaliana</name>
    <name type="common">Mouse-ear cress</name>
    <dbReference type="NCBI Taxonomy" id="3702"/>
    <lineage>
        <taxon>Eukaryota</taxon>
        <taxon>Viridiplantae</taxon>
        <taxon>Streptophyta</taxon>
        <taxon>Embryophyta</taxon>
        <taxon>Tracheophyta</taxon>
        <taxon>Spermatophyta</taxon>
        <taxon>Magnoliopsida</taxon>
        <taxon>eudicotyledons</taxon>
        <taxon>Gunneridae</taxon>
        <taxon>Pentapetalae</taxon>
        <taxon>rosids</taxon>
        <taxon>malvids</taxon>
        <taxon>Brassicales</taxon>
        <taxon>Brassicaceae</taxon>
        <taxon>Camelineae</taxon>
        <taxon>Arabidopsis</taxon>
    </lineage>
</organism>
<gene>
    <name type="primary">CAM6</name>
    <name type="ordered locus">At5g21274</name>
    <name type="ORF">F13M11</name>
</gene>
<dbReference type="EMBL" id="Z12024">
    <property type="protein sequence ID" value="CAA78059.1"/>
    <property type="molecule type" value="mRNA"/>
</dbReference>
<dbReference type="EMBL" id="AC140977">
    <property type="protein sequence ID" value="AAO73886.1"/>
    <property type="molecule type" value="Genomic_DNA"/>
</dbReference>
<dbReference type="EMBL" id="CP002688">
    <property type="protein sequence ID" value="AED92947.1"/>
    <property type="molecule type" value="Genomic_DNA"/>
</dbReference>
<dbReference type="EMBL" id="AY050350">
    <property type="protein sequence ID" value="AAK91367.1"/>
    <property type="molecule type" value="mRNA"/>
</dbReference>
<dbReference type="EMBL" id="AY094037">
    <property type="protein sequence ID" value="AAM16193.1"/>
    <property type="molecule type" value="mRNA"/>
</dbReference>
<dbReference type="PIR" id="S35187">
    <property type="entry name" value="S35187"/>
</dbReference>
<dbReference type="RefSeq" id="NP_850860.1">
    <property type="nucleotide sequence ID" value="NM_180529.4"/>
</dbReference>
<dbReference type="SMR" id="Q03509"/>
<dbReference type="BioGRID" id="17520">
    <property type="interactions" value="106"/>
</dbReference>
<dbReference type="FunCoup" id="Q03509">
    <property type="interactions" value="3435"/>
</dbReference>
<dbReference type="IntAct" id="Q03509">
    <property type="interactions" value="107"/>
</dbReference>
<dbReference type="STRING" id="3702.Q03509"/>
<dbReference type="iPTMnet" id="Q03509"/>
<dbReference type="PaxDb" id="3702-AT5G21274.1"/>
<dbReference type="ProteomicsDB" id="240281"/>
<dbReference type="EnsemblPlants" id="AT5G21274.1">
    <property type="protein sequence ID" value="AT5G21274.1"/>
    <property type="gene ID" value="AT5G21274"/>
</dbReference>
<dbReference type="GeneID" id="832245"/>
<dbReference type="Gramene" id="AT5G21274.1">
    <property type="protein sequence ID" value="AT5G21274.1"/>
    <property type="gene ID" value="AT5G21274"/>
</dbReference>
<dbReference type="KEGG" id="ath:AT5G21274"/>
<dbReference type="Araport" id="AT5G21274"/>
<dbReference type="TAIR" id="AT5G21274">
    <property type="gene designation" value="CAM6"/>
</dbReference>
<dbReference type="eggNOG" id="KOG0027">
    <property type="taxonomic scope" value="Eukaryota"/>
</dbReference>
<dbReference type="HOGENOM" id="CLU_061288_2_0_1"/>
<dbReference type="InParanoid" id="Q03509"/>
<dbReference type="OMA" id="MNACSER"/>
<dbReference type="OrthoDB" id="1042764at2759"/>
<dbReference type="PhylomeDB" id="Q03509"/>
<dbReference type="PRO" id="PR:Q03509"/>
<dbReference type="Proteomes" id="UP000006548">
    <property type="component" value="Chromosome 5"/>
</dbReference>
<dbReference type="ExpressionAtlas" id="Q03509">
    <property type="expression patterns" value="baseline and differential"/>
</dbReference>
<dbReference type="GO" id="GO:0005829">
    <property type="term" value="C:cytosol"/>
    <property type="evidence" value="ECO:0007005"/>
    <property type="project" value="TAIR"/>
</dbReference>
<dbReference type="GO" id="GO:0009536">
    <property type="term" value="C:plastid"/>
    <property type="evidence" value="ECO:0007005"/>
    <property type="project" value="TAIR"/>
</dbReference>
<dbReference type="GO" id="GO:0005509">
    <property type="term" value="F:calcium ion binding"/>
    <property type="evidence" value="ECO:0000250"/>
    <property type="project" value="TAIR"/>
</dbReference>
<dbReference type="GO" id="GO:0019722">
    <property type="term" value="P:calcium-mediated signaling"/>
    <property type="evidence" value="ECO:0000304"/>
    <property type="project" value="TAIR"/>
</dbReference>
<dbReference type="CDD" id="cd00051">
    <property type="entry name" value="EFh"/>
    <property type="match status" value="2"/>
</dbReference>
<dbReference type="FunFam" id="1.10.238.10:FF:000034">
    <property type="entry name" value="Calmodulin"/>
    <property type="match status" value="1"/>
</dbReference>
<dbReference type="FunFam" id="1.10.238.10:FF:000042">
    <property type="entry name" value="Calmodulin"/>
    <property type="match status" value="1"/>
</dbReference>
<dbReference type="Gene3D" id="1.10.238.10">
    <property type="entry name" value="EF-hand"/>
    <property type="match status" value="3"/>
</dbReference>
<dbReference type="InterPro" id="IPR050230">
    <property type="entry name" value="CALM/Myosin/TropC-like"/>
</dbReference>
<dbReference type="InterPro" id="IPR011992">
    <property type="entry name" value="EF-hand-dom_pair"/>
</dbReference>
<dbReference type="InterPro" id="IPR018247">
    <property type="entry name" value="EF_Hand_1_Ca_BS"/>
</dbReference>
<dbReference type="InterPro" id="IPR002048">
    <property type="entry name" value="EF_hand_dom"/>
</dbReference>
<dbReference type="PANTHER" id="PTHR23048:SF53">
    <property type="entry name" value="CALMODULIN"/>
    <property type="match status" value="1"/>
</dbReference>
<dbReference type="PANTHER" id="PTHR23048">
    <property type="entry name" value="MYOSIN LIGHT CHAIN 1, 3"/>
    <property type="match status" value="1"/>
</dbReference>
<dbReference type="Pfam" id="PF13499">
    <property type="entry name" value="EF-hand_7"/>
    <property type="match status" value="2"/>
</dbReference>
<dbReference type="SMART" id="SM00054">
    <property type="entry name" value="EFh"/>
    <property type="match status" value="4"/>
</dbReference>
<dbReference type="SUPFAM" id="SSF47473">
    <property type="entry name" value="EF-hand"/>
    <property type="match status" value="1"/>
</dbReference>
<dbReference type="PROSITE" id="PS00018">
    <property type="entry name" value="EF_HAND_1"/>
    <property type="match status" value="4"/>
</dbReference>
<dbReference type="PROSITE" id="PS50222">
    <property type="entry name" value="EF_HAND_2"/>
    <property type="match status" value="4"/>
</dbReference>
<feature type="chain" id="PRO_0000198282" description="Calmodulin-6">
    <location>
        <begin position="1"/>
        <end position="149"/>
    </location>
</feature>
<feature type="domain" description="EF-hand 1" evidence="1">
    <location>
        <begin position="8"/>
        <end position="43"/>
    </location>
</feature>
<feature type="domain" description="EF-hand 2" evidence="1">
    <location>
        <begin position="44"/>
        <end position="79"/>
    </location>
</feature>
<feature type="domain" description="EF-hand 3" evidence="1">
    <location>
        <begin position="81"/>
        <end position="116"/>
    </location>
</feature>
<feature type="domain" description="EF-hand 4" evidence="1">
    <location>
        <begin position="117"/>
        <end position="149"/>
    </location>
</feature>
<feature type="binding site" evidence="1">
    <location>
        <position position="21"/>
    </location>
    <ligand>
        <name>Ca(2+)</name>
        <dbReference type="ChEBI" id="CHEBI:29108"/>
        <label>1</label>
    </ligand>
</feature>
<feature type="binding site" evidence="1">
    <location>
        <position position="23"/>
    </location>
    <ligand>
        <name>Ca(2+)</name>
        <dbReference type="ChEBI" id="CHEBI:29108"/>
        <label>1</label>
    </ligand>
</feature>
<feature type="binding site" evidence="1">
    <location>
        <position position="25"/>
    </location>
    <ligand>
        <name>Ca(2+)</name>
        <dbReference type="ChEBI" id="CHEBI:29108"/>
        <label>1</label>
    </ligand>
</feature>
<feature type="binding site" evidence="1">
    <location>
        <position position="27"/>
    </location>
    <ligand>
        <name>Ca(2+)</name>
        <dbReference type="ChEBI" id="CHEBI:29108"/>
        <label>1</label>
    </ligand>
</feature>
<feature type="binding site" evidence="1">
    <location>
        <position position="32"/>
    </location>
    <ligand>
        <name>Ca(2+)</name>
        <dbReference type="ChEBI" id="CHEBI:29108"/>
        <label>1</label>
    </ligand>
</feature>
<feature type="binding site" evidence="1">
    <location>
        <position position="57"/>
    </location>
    <ligand>
        <name>Ca(2+)</name>
        <dbReference type="ChEBI" id="CHEBI:29108"/>
        <label>2</label>
    </ligand>
</feature>
<feature type="binding site" evidence="1">
    <location>
        <position position="59"/>
    </location>
    <ligand>
        <name>Ca(2+)</name>
        <dbReference type="ChEBI" id="CHEBI:29108"/>
        <label>2</label>
    </ligand>
</feature>
<feature type="binding site" evidence="1">
    <location>
        <position position="61"/>
    </location>
    <ligand>
        <name>Ca(2+)</name>
        <dbReference type="ChEBI" id="CHEBI:29108"/>
        <label>2</label>
    </ligand>
</feature>
<feature type="binding site" evidence="1">
    <location>
        <position position="63"/>
    </location>
    <ligand>
        <name>Ca(2+)</name>
        <dbReference type="ChEBI" id="CHEBI:29108"/>
        <label>2</label>
    </ligand>
</feature>
<feature type="binding site" evidence="1">
    <location>
        <position position="68"/>
    </location>
    <ligand>
        <name>Ca(2+)</name>
        <dbReference type="ChEBI" id="CHEBI:29108"/>
        <label>2</label>
    </ligand>
</feature>
<feature type="binding site" evidence="1">
    <location>
        <position position="94"/>
    </location>
    <ligand>
        <name>Ca(2+)</name>
        <dbReference type="ChEBI" id="CHEBI:29108"/>
        <label>3</label>
    </ligand>
</feature>
<feature type="binding site" evidence="1">
    <location>
        <position position="96"/>
    </location>
    <ligand>
        <name>Ca(2+)</name>
        <dbReference type="ChEBI" id="CHEBI:29108"/>
        <label>3</label>
    </ligand>
</feature>
<feature type="binding site" evidence="1">
    <location>
        <position position="98"/>
    </location>
    <ligand>
        <name>Ca(2+)</name>
        <dbReference type="ChEBI" id="CHEBI:29108"/>
        <label>3</label>
    </ligand>
</feature>
<feature type="binding site" evidence="1">
    <location>
        <position position="105"/>
    </location>
    <ligand>
        <name>Ca(2+)</name>
        <dbReference type="ChEBI" id="CHEBI:29108"/>
        <label>3</label>
    </ligand>
</feature>
<feature type="binding site" evidence="1">
    <location>
        <position position="130"/>
    </location>
    <ligand>
        <name>Ca(2+)</name>
        <dbReference type="ChEBI" id="CHEBI:29108"/>
        <label>4</label>
    </ligand>
</feature>
<feature type="binding site" evidence="1">
    <location>
        <position position="132"/>
    </location>
    <ligand>
        <name>Ca(2+)</name>
        <dbReference type="ChEBI" id="CHEBI:29108"/>
        <label>4</label>
    </ligand>
</feature>
<feature type="binding site" evidence="1">
    <location>
        <position position="134"/>
    </location>
    <ligand>
        <name>Ca(2+)</name>
        <dbReference type="ChEBI" id="CHEBI:29108"/>
        <label>4</label>
    </ligand>
</feature>
<feature type="binding site" evidence="1">
    <location>
        <position position="136"/>
    </location>
    <ligand>
        <name>Ca(2+)</name>
        <dbReference type="ChEBI" id="CHEBI:29108"/>
        <label>4</label>
    </ligand>
</feature>
<feature type="binding site" evidence="1">
    <location>
        <position position="141"/>
    </location>
    <ligand>
        <name>Ca(2+)</name>
        <dbReference type="ChEBI" id="CHEBI:29108"/>
        <label>4</label>
    </ligand>
</feature>